<organism>
    <name type="scientific">Arabidopsis thaliana</name>
    <name type="common">Mouse-ear cress</name>
    <dbReference type="NCBI Taxonomy" id="3702"/>
    <lineage>
        <taxon>Eukaryota</taxon>
        <taxon>Viridiplantae</taxon>
        <taxon>Streptophyta</taxon>
        <taxon>Embryophyta</taxon>
        <taxon>Tracheophyta</taxon>
        <taxon>Spermatophyta</taxon>
        <taxon>Magnoliopsida</taxon>
        <taxon>eudicotyledons</taxon>
        <taxon>Gunneridae</taxon>
        <taxon>Pentapetalae</taxon>
        <taxon>rosids</taxon>
        <taxon>malvids</taxon>
        <taxon>Brassicales</taxon>
        <taxon>Brassicaceae</taxon>
        <taxon>Camelineae</taxon>
        <taxon>Arabidopsis</taxon>
    </lineage>
</organism>
<evidence type="ECO:0000250" key="1">
    <source>
        <dbReference type="UniProtKB" id="Q9FE20"/>
    </source>
</evidence>
<evidence type="ECO:0000255" key="2">
    <source>
        <dbReference type="PROSITE-ProRule" id="PRU00159"/>
    </source>
</evidence>
<evidence type="ECO:0000256" key="3">
    <source>
        <dbReference type="SAM" id="MobiDB-lite"/>
    </source>
</evidence>
<evidence type="ECO:0000269" key="4">
    <source>
    </source>
</evidence>
<evidence type="ECO:0000269" key="5">
    <source>
    </source>
</evidence>
<evidence type="ECO:0000269" key="6">
    <source>
    </source>
</evidence>
<evidence type="ECO:0000269" key="7">
    <source>
    </source>
</evidence>
<evidence type="ECO:0000269" key="8">
    <source>
    </source>
</evidence>
<evidence type="ECO:0000269" key="9">
    <source>
    </source>
</evidence>
<evidence type="ECO:0000269" key="10">
    <source>
    </source>
</evidence>
<evidence type="ECO:0000269" key="11">
    <source>
    </source>
</evidence>
<evidence type="ECO:0000269" key="12">
    <source>
    </source>
</evidence>
<evidence type="ECO:0000269" key="13">
    <source>
    </source>
</evidence>
<evidence type="ECO:0000269" key="14">
    <source>
    </source>
</evidence>
<evidence type="ECO:0000269" key="15">
    <source>
    </source>
</evidence>
<evidence type="ECO:0000269" key="16">
    <source>
    </source>
</evidence>
<evidence type="ECO:0000269" key="17">
    <source>
    </source>
</evidence>
<evidence type="ECO:0000269" key="18">
    <source>
    </source>
</evidence>
<evidence type="ECO:0000269" key="19">
    <source>
    </source>
</evidence>
<evidence type="ECO:0000269" key="20">
    <source>
    </source>
</evidence>
<evidence type="ECO:0000269" key="21">
    <source>
    </source>
</evidence>
<evidence type="ECO:0000269" key="22">
    <source>
    </source>
</evidence>
<evidence type="ECO:0000269" key="23">
    <source>
    </source>
</evidence>
<evidence type="ECO:0000303" key="24">
    <source>
    </source>
</evidence>
<evidence type="ECO:0000305" key="25"/>
<evidence type="ECO:0000305" key="26">
    <source>
    </source>
</evidence>
<evidence type="ECO:0000312" key="27">
    <source>
        <dbReference type="Araport" id="AT2G39660"/>
    </source>
</evidence>
<evidence type="ECO:0000312" key="28">
    <source>
        <dbReference type="EMBL" id="AAB97121.1"/>
    </source>
</evidence>
<evidence type="ECO:0000312" key="29">
    <source>
        <dbReference type="EMBL" id="AAM14921.1"/>
    </source>
</evidence>
<evidence type="ECO:0007829" key="30">
    <source>
        <dbReference type="PDB" id="5TOS"/>
    </source>
</evidence>
<proteinExistence type="evidence at protein level"/>
<reference key="1">
    <citation type="journal article" date="1999" name="Nature">
        <title>Sequence and analysis of chromosome 2 of the plant Arabidopsis thaliana.</title>
        <authorList>
            <person name="Lin X."/>
            <person name="Kaul S."/>
            <person name="Rounsley S.D."/>
            <person name="Shea T.P."/>
            <person name="Benito M.-I."/>
            <person name="Town C.D."/>
            <person name="Fujii C.Y."/>
            <person name="Mason T.M."/>
            <person name="Bowman C.L."/>
            <person name="Barnstead M.E."/>
            <person name="Feldblyum T.V."/>
            <person name="Buell C.R."/>
            <person name="Ketchum K.A."/>
            <person name="Lee J.J."/>
            <person name="Ronning C.M."/>
            <person name="Koo H.L."/>
            <person name="Moffat K.S."/>
            <person name="Cronin L.A."/>
            <person name="Shen M."/>
            <person name="Pai G."/>
            <person name="Van Aken S."/>
            <person name="Umayam L."/>
            <person name="Tallon L.J."/>
            <person name="Gill J.E."/>
            <person name="Adams M.D."/>
            <person name="Carrera A.J."/>
            <person name="Creasy T.H."/>
            <person name="Goodman H.M."/>
            <person name="Somerville C.R."/>
            <person name="Copenhaver G.P."/>
            <person name="Preuss D."/>
            <person name="Nierman W.C."/>
            <person name="White O."/>
            <person name="Eisen J.A."/>
            <person name="Salzberg S.L."/>
            <person name="Fraser C.M."/>
            <person name="Venter J.C."/>
        </authorList>
    </citation>
    <scope>NUCLEOTIDE SEQUENCE [LARGE SCALE GENOMIC DNA]</scope>
    <source>
        <strain>cv. Columbia</strain>
    </source>
</reference>
<reference key="2">
    <citation type="journal article" date="2017" name="Plant J.">
        <title>Araport11: a complete reannotation of the Arabidopsis thaliana reference genome.</title>
        <authorList>
            <person name="Cheng C.Y."/>
            <person name="Krishnakumar V."/>
            <person name="Chan A.P."/>
            <person name="Thibaud-Nissen F."/>
            <person name="Schobel S."/>
            <person name="Town C.D."/>
        </authorList>
    </citation>
    <scope>GENOME REANNOTATION</scope>
    <source>
        <strain>cv. Columbia</strain>
    </source>
</reference>
<reference key="3">
    <citation type="journal article" date="2003" name="Science">
        <title>Empirical analysis of transcriptional activity in the Arabidopsis genome.</title>
        <authorList>
            <person name="Yamada K."/>
            <person name="Lim J."/>
            <person name="Dale J.M."/>
            <person name="Chen H."/>
            <person name="Shinn P."/>
            <person name="Palm C.J."/>
            <person name="Southwick A.M."/>
            <person name="Wu H.C."/>
            <person name="Kim C.J."/>
            <person name="Nguyen M."/>
            <person name="Pham P.K."/>
            <person name="Cheuk R.F."/>
            <person name="Karlin-Newmann G."/>
            <person name="Liu S.X."/>
            <person name="Lam B."/>
            <person name="Sakano H."/>
            <person name="Wu T."/>
            <person name="Yu G."/>
            <person name="Miranda M."/>
            <person name="Quach H.L."/>
            <person name="Tripp M."/>
            <person name="Chang C.H."/>
            <person name="Lee J.M."/>
            <person name="Toriumi M.J."/>
            <person name="Chan M.M."/>
            <person name="Tang C.C."/>
            <person name="Onodera C.S."/>
            <person name="Deng J.M."/>
            <person name="Akiyama K."/>
            <person name="Ansari Y."/>
            <person name="Arakawa T."/>
            <person name="Banh J."/>
            <person name="Banno F."/>
            <person name="Bowser L."/>
            <person name="Brooks S.Y."/>
            <person name="Carninci P."/>
            <person name="Chao Q."/>
            <person name="Choy N."/>
            <person name="Enju A."/>
            <person name="Goldsmith A.D."/>
            <person name="Gurjal M."/>
            <person name="Hansen N.F."/>
            <person name="Hayashizaki Y."/>
            <person name="Johnson-Hopson C."/>
            <person name="Hsuan V.W."/>
            <person name="Iida K."/>
            <person name="Karnes M."/>
            <person name="Khan S."/>
            <person name="Koesema E."/>
            <person name="Ishida J."/>
            <person name="Jiang P.X."/>
            <person name="Jones T."/>
            <person name="Kawai J."/>
            <person name="Kamiya A."/>
            <person name="Meyers C."/>
            <person name="Nakajima M."/>
            <person name="Narusaka M."/>
            <person name="Seki M."/>
            <person name="Sakurai T."/>
            <person name="Satou M."/>
            <person name="Tamse R."/>
            <person name="Vaysberg M."/>
            <person name="Wallender E.K."/>
            <person name="Wong C."/>
            <person name="Yamamura Y."/>
            <person name="Yuan S."/>
            <person name="Shinozaki K."/>
            <person name="Davis R.W."/>
            <person name="Theologis A."/>
            <person name="Ecker J.R."/>
        </authorList>
    </citation>
    <scope>NUCLEOTIDE SEQUENCE [LARGE SCALE MRNA]</scope>
    <source>
        <strain>cv. Columbia</strain>
    </source>
</reference>
<reference key="4">
    <citation type="journal article" date="2006" name="Plant Cell">
        <title>The membrane-anchored BOTRYTIS-INDUCED KINASE1 plays distinct roles in Arabidopsis resistance to necrotrophic and biotrophic pathogens.</title>
        <authorList>
            <person name="Veronese P."/>
            <person name="Nakagami H."/>
            <person name="Bluhm B."/>
            <person name="Abuqamar S."/>
            <person name="Chen X."/>
            <person name="Salmeron J."/>
            <person name="Dietrich R.A."/>
            <person name="Hirt H."/>
            <person name="Mengiste T."/>
        </authorList>
    </citation>
    <scope>FUNCTION</scope>
    <scope>SUBCELLULAR LOCATION</scope>
    <scope>INDUCTION</scope>
    <scope>DISRUPTION PHENOTYPE</scope>
</reference>
<reference key="5">
    <citation type="journal article" date="2010" name="Cell Host Microbe">
        <title>Receptor-like cytoplasmic kinases integrate signaling from multiple plant immune receptors and are targeted by a Pseudomonas syringae effector.</title>
        <authorList>
            <person name="Zhang J."/>
            <person name="Li W."/>
            <person name="Xiang T."/>
            <person name="Liu Z."/>
            <person name="Laluk K."/>
            <person name="Ding X."/>
            <person name="Zou Y."/>
            <person name="Gao M."/>
            <person name="Zhang X."/>
            <person name="Chen S."/>
            <person name="Mengiste T."/>
            <person name="Zhang Y."/>
            <person name="Zhou J.M."/>
        </authorList>
    </citation>
    <scope>FUNCTION</scope>
    <scope>INTERACTION WITH FLS2</scope>
    <scope>PHOSPHORYLATION AT SER-236</scope>
    <scope>INDUCTION BY FLAGELLIN</scope>
    <scope>DISRUPTION PHENOTYPE</scope>
</reference>
<reference key="6">
    <citation type="journal article" date="2010" name="Plant Signal. Behav.">
        <title>Phosphorylation of receptor-like cytoplasmic kinases by bacterial flagellin.</title>
        <authorList>
            <person name="Lu D."/>
            <person name="Wu S."/>
            <person name="He P."/>
            <person name="Shan L."/>
        </authorList>
    </citation>
    <scope>FUNCTION</scope>
    <scope>INTERACTION WITH FLS2 AND BAK1</scope>
    <scope>AUTOPHOSPHORYLATION</scope>
    <scope>PHOSPHORYLATION AT THR-237</scope>
</reference>
<reference key="7">
    <citation type="journal article" date="2012" name="Nature">
        <title>A Xanthomonas uridine 5'-monophosphate transferase inhibits plant immune kinases.</title>
        <authorList>
            <person name="Feng F."/>
            <person name="Yang F."/>
            <person name="Rong W."/>
            <person name="Wu X."/>
            <person name="Zhang J."/>
            <person name="Chen S."/>
            <person name="He C."/>
            <person name="Zhou J.M."/>
        </authorList>
    </citation>
    <scope>FUNCTION</scope>
    <scope>IDENTIFICATION BY MASS SPECTROMETRY</scope>
    <scope>INTERACTION WITH XANTHOMONAS CAMPESTRIS XOPAC/AVRAC</scope>
    <scope>PHOSPHORYLATION</scope>
    <scope>URIDYLYLATION AT SER-236 AND THR-237</scope>
</reference>
<reference key="8">
    <citation type="journal article" date="2013" name="Proc. Natl. Acad. Sci. U.S.A.">
        <title>BIK1 interacts with PEPRs to mediate ethylene-induced immunity.</title>
        <authorList>
            <person name="Liu Z."/>
            <person name="Wu Y."/>
            <person name="Yang F."/>
            <person name="Zhang Y."/>
            <person name="Chen S."/>
            <person name="Xie Q."/>
            <person name="Tian X."/>
            <person name="Zhou J.M."/>
        </authorList>
    </citation>
    <scope>FUNCTION</scope>
    <scope>INTERACTION WITH PEPR1</scope>
    <scope>PHOSPHORYLATION AT SER-233; SER-236 AND THR-237</scope>
    <scope>MUTAGENESIS OF LYS-105</scope>
</reference>
<reference key="9">
    <citation type="journal article" date="2013" name="Proc. Natl. Acad. Sci. U.S.A.">
        <title>Inverse modulation of plant immune and brassinosteroid signaling pathways by the receptor-like cytoplasmic kinase BIK1.</title>
        <authorList>
            <person name="Lin W."/>
            <person name="Lu D."/>
            <person name="Gao X."/>
            <person name="Jiang S."/>
            <person name="Ma X."/>
            <person name="Wang Z."/>
            <person name="Mengiste T."/>
            <person name="He P."/>
            <person name="Shan L."/>
        </authorList>
    </citation>
    <scope>FUNCTION</scope>
    <scope>INTERACTION WITH BRI1</scope>
    <scope>DISRUPTION PHENOTYPE</scope>
</reference>
<reference key="10">
    <citation type="journal article" date="2013" name="Protein Cell">
        <title>Identification and functional analysis of phosphorylation residues of the Arabidopsis BOTRYTIS-INDUCED KINASE1.</title>
        <authorList>
            <person name="Xu J."/>
            <person name="Wei X."/>
            <person name="Yan L."/>
            <person name="Liu D."/>
            <person name="Ma Y."/>
            <person name="Guo Y."/>
            <person name="Peng C."/>
            <person name="Zhou H."/>
            <person name="Yang C."/>
            <person name="Lou Z."/>
            <person name="Shui W."/>
        </authorList>
    </citation>
    <scope>FUNCTION</scope>
    <scope>CATALYTIC ACTIVITY</scope>
    <scope>PHOSPHORYLATION AT SER-48; SER-54; THR-56; SER-71; SER-129; TYR-168; SER-206; TYR-214; SER-233; SER-236; THR-237; THR-242; TYR-250; SER-252; SER-253; THR-314; SER-360; THR-362 AND THR-368</scope>
    <scope>MUTAGENESIS OF ASP-202</scope>
</reference>
<reference key="11">
    <citation type="journal article" date="2014" name="BMC Plant Biol.">
        <title>Microbe-associated molecular pattern-induced calcium signaling requires the receptor-like cytoplasmic kinases, PBL1 and BIK1.</title>
        <authorList>
            <person name="Ranf S."/>
            <person name="Eschen-Lippold L."/>
            <person name="Froehlich K."/>
            <person name="Westphal L."/>
            <person name="Scheel D."/>
            <person name="Lee J."/>
        </authorList>
    </citation>
    <scope>FUNCTION</scope>
    <scope>MUTAGENESIS OF GLY-2</scope>
    <scope>DISRUPTION PHENOTYPE</scope>
    <scope>PHOSPHORYLATION</scope>
    <source>
        <strain>cv. Columbia</strain>
    </source>
</reference>
<reference key="12">
    <citation type="journal article" date="2014" name="Cell Host Microbe">
        <title>The FLS2-associated kinase BIK1 directly phosphorylates the NADPH oxidase RbohD to control plant immunity.</title>
        <authorList>
            <person name="Li L."/>
            <person name="Li M."/>
            <person name="Yu L."/>
            <person name="Zhou Z."/>
            <person name="Liang X."/>
            <person name="Liu Z."/>
            <person name="Cai G."/>
            <person name="Gao L."/>
            <person name="Zhang X."/>
            <person name="Wang Y."/>
            <person name="Chen S."/>
            <person name="Zhou J.M."/>
        </authorList>
    </citation>
    <scope>FUNCTION</scope>
    <scope>INTERACTION WITH RBOHD</scope>
</reference>
<reference key="13">
    <citation type="journal article" date="2014" name="Cell Host Microbe">
        <title>The calcium-dependent protein kinase CPK28 buffers plant immunity and regulates BIK1 turnover.</title>
        <authorList>
            <person name="Monaghan J."/>
            <person name="Matschi S."/>
            <person name="Shorinola O."/>
            <person name="Rovenich H."/>
            <person name="Matei A."/>
            <person name="Segonzac C."/>
            <person name="Malinovsky F.G."/>
            <person name="Rathjen J.P."/>
            <person name="MacLean D."/>
            <person name="Romeis T."/>
            <person name="Zipfel C."/>
        </authorList>
    </citation>
    <scope>INTERACTION WITH CPK28</scope>
</reference>
<reference key="14">
    <citation type="journal article" date="2014" name="Proc. Natl. Acad. Sci. U.S.A.">
        <title>Tyrosine phosphorylation of protein kinase complex BAK1/BIK1 mediates Arabidopsis innate immunity.</title>
        <authorList>
            <person name="Lin W."/>
            <person name="Li B."/>
            <person name="Lu D."/>
            <person name="Chen S."/>
            <person name="Zhu N."/>
            <person name="He P."/>
            <person name="Shan L."/>
        </authorList>
    </citation>
    <scope>PHOSPHORYLATION AT TYR-150; TYR-243 AND TYR-250</scope>
    <scope>MUTAGENESIS OF TYR-150; TYR-243 AND TYR-250</scope>
</reference>
<reference key="15">
    <citation type="journal article" date="2015" name="Cell Host Microbe">
        <title>The decoy substrate of a pathogen effector and a pseudokinase specify pathogen-induced modified-self recognition and immunity in plants.</title>
        <authorList>
            <person name="Wang G."/>
            <person name="Roux B."/>
            <person name="Feng F."/>
            <person name="Guy E."/>
            <person name="Li L."/>
            <person name="Li N."/>
            <person name="Zhang X."/>
            <person name="Lautier M."/>
            <person name="Jardinaud M.-F."/>
            <person name="Chabannes M."/>
            <person name="Arlat M."/>
            <person name="Chen S."/>
            <person name="He C."/>
            <person name="Noel L.D."/>
            <person name="Zhou J.-M."/>
        </authorList>
    </citation>
    <scope>FUNCTION (MICROBIAL INFECTION)</scope>
    <source>
        <strain>cv. Columbia</strain>
    </source>
</reference>
<reference key="16">
    <citation type="journal article" date="2015" name="Plant Cell Rep.">
        <title>Regulatory role of BOTRYTIS INDUCED KINASE1 in ETHYLENE INSENSITIVE3-dependent gene expression in Arabidopsis.</title>
        <authorList>
            <person name="Kang G.H."/>
            <person name="Son S."/>
            <person name="Cho Y.H."/>
            <person name="Yoo S.D."/>
        </authorList>
    </citation>
    <scope>FUNCTION</scope>
    <scope>SUBCELLULAR LOCATION</scope>
    <scope>AUTOPHOSPHORYLATION</scope>
    <scope>MUTAGENESIS OF GLY-2</scope>
    <scope>MYRISTOYLATION AT GLY-2</scope>
</reference>
<reference key="17">
    <citation type="journal article" date="2016" name="Front. Physiol.">
        <title>Arabidopsis mutant bik1 exhibits strong resistance to Plasmodiophora brassicae.</title>
        <authorList>
            <person name="Chen T."/>
            <person name="Bi K."/>
            <person name="He Z."/>
            <person name="Gao Z."/>
            <person name="Zhao Y."/>
            <person name="Fu Y."/>
            <person name="Cheng J."/>
            <person name="Xie J."/>
            <person name="Jiang D."/>
        </authorList>
    </citation>
    <scope>DISRUPTION PHENOTYPE</scope>
</reference>
<reference key="18">
    <citation type="journal article" date="2016" name="PLoS Pathog.">
        <title>The Arabidopsis protein phosphatase PP2C38 negatively regulates the central immune kinase BIK1.</title>
        <authorList>
            <person name="Couto D."/>
            <person name="Niebergall R."/>
            <person name="Liang X."/>
            <person name="Buecherl C.A."/>
            <person name="Sklenar J."/>
            <person name="Macho A.P."/>
            <person name="Ntoukakis V."/>
            <person name="Derbyshire P."/>
            <person name="Altenbach D."/>
            <person name="Maclean D."/>
            <person name="Robatzek S."/>
            <person name="Uhrig J."/>
            <person name="Menke F."/>
            <person name="Zhou J.M."/>
            <person name="Zipfel C."/>
        </authorList>
    </citation>
    <scope>ACTIVITY REGULATION</scope>
    <scope>INTERACTION WITH PP2C38</scope>
</reference>
<reference key="19">
    <citation type="journal article" date="2018" name="Cell Host Microbe">
        <title>The MAP4 Kinase SIK1 Ensures Robust Extracellular ROS Burst and Antibacterial Immunity in Plants.</title>
        <authorList>
            <person name="Zhang M."/>
            <person name="Chiang Y.-H."/>
            <person name="Toruno T.Y."/>
            <person name="Lee D."/>
            <person name="Ma M."/>
            <person name="Liang X."/>
            <person name="Lal N.K."/>
            <person name="Lemos M."/>
            <person name="Lu Y.-J."/>
            <person name="Ma S."/>
            <person name="Liu J."/>
            <person name="Day B."/>
            <person name="Dinesh-Kumar S.P."/>
            <person name="Dehesh K."/>
            <person name="Dou D."/>
            <person name="Zhou J.-M."/>
            <person name="Coaker G."/>
        </authorList>
    </citation>
    <scope>FUNCTION</scope>
    <scope>MUTAGENESIS OF LYS-105 AND LYS-106</scope>
    <scope>INTERACTION WITH SIK1</scope>
    <scope>PTM</scope>
    <scope>PHOSPHORYLATION AT SER-26; SER-32; SER-33; SER-34; THR-35; THR-42; THR-50; SER-54; THR-56; THR-64; SER-71; THR-120; TYR-168; SER-193; SER-206; SER-219; SER-233; SER-236; THR-314; THR-341; SER-360; THR-362; THR-368; THR-375 AND THR-377</scope>
    <source>
        <strain>cv. Columbia</strain>
    </source>
</reference>
<reference key="20">
    <citation type="journal article" date="2020" name="Nature">
        <title>Ligand-induced monoubiquitination of BIK1 regulates plant immunity.</title>
        <authorList>
            <person name="Ma X."/>
            <person name="Claus L.A.N."/>
            <person name="Leslie M.E."/>
            <person name="Tao K."/>
            <person name="Wu Z."/>
            <person name="Liu J."/>
            <person name="Yu X."/>
            <person name="Li B."/>
            <person name="Zhou J."/>
            <person name="Savatin D.V."/>
            <person name="Peng J."/>
            <person name="Tyler B.M."/>
            <person name="Heese A."/>
            <person name="Russinova E."/>
            <person name="He P."/>
            <person name="Shan L."/>
        </authorList>
    </citation>
    <scope>FUNCTION</scope>
    <scope>UBIQUITINATION AT LYS-31; LYS-41; LYS-95; LYS-170; LYS-186; LYS-286; LYS-337; LYS-358 AND LYS-366</scope>
    <scope>MUTAGENESIS OF GLY-2; LYS-31; LYS-41; LYS-95; LYS-106; LYS-170; LYS-186; LYS-204; THR-237; TYR-250; LYS-286; LYS-337; LYS-358 AND LYS-366</scope>
    <scope>UBIQUITINATION</scope>
    <scope>PHOSPHORYLATION</scope>
    <scope>SUBCELLULAR LOCATION</scope>
    <scope>INTERACTION WITH FLS2; ATL44/RHA3A AND ATL45/RHA3B</scope>
</reference>
<reference key="21">
    <citation type="journal article" date="2020" name="Nature">
        <title>The calcium-permeable channel OSCA1.3 regulates plant stomatal immunity.</title>
        <authorList>
            <person name="Thor K."/>
            <person name="Jiang S."/>
            <person name="Michard E."/>
            <person name="George J."/>
            <person name="Scherzer S."/>
            <person name="Huang S."/>
            <person name="Dindas J."/>
            <person name="Derbyshire P."/>
            <person name="Leitao N."/>
            <person name="DeFalco T.A."/>
            <person name="Koester P."/>
            <person name="Hunter K."/>
            <person name="Kimura S."/>
            <person name="Gronnier J."/>
            <person name="Stransfeld L."/>
            <person name="Kadota Y."/>
            <person name="Buecherl C.A."/>
            <person name="Charpentier M."/>
            <person name="Wrzaczek M."/>
            <person name="MacLean D."/>
            <person name="Oldroyd G.E.D."/>
            <person name="Menke F.L.H."/>
            <person name="Roelfsema M.R.G."/>
            <person name="Hedrich R."/>
            <person name="Feijo J."/>
            <person name="Zipfel C."/>
        </authorList>
    </citation>
    <scope>FUNCTION</scope>
    <scope>CATALYTIC ACTIVITY</scope>
</reference>
<reference key="22">
    <citation type="journal article" date="2021" name="Nat. Commun.">
        <title>The Arabidopsis MIK2 receptor elicits immunity by sensing a conserved signature from phytocytokines and microbes.</title>
        <authorList>
            <person name="Hou S."/>
            <person name="Liu D."/>
            <person name="Huang S."/>
            <person name="Luo D."/>
            <person name="Liu Z."/>
            <person name="Xiang Q."/>
            <person name="Wang P."/>
            <person name="Mu R."/>
            <person name="Han Z."/>
            <person name="Chen S."/>
            <person name="Chai J."/>
            <person name="Shan L."/>
            <person name="He P."/>
        </authorList>
    </citation>
    <scope>FUNCTION</scope>
    <scope>DISRUPTION PHENOTYPE</scope>
    <source>
        <strain>cv. Columbia</strain>
    </source>
</reference>
<reference key="23">
    <citation type="journal article" date="2018" name="Cell Host Microbe">
        <title>The receptor-like cytoplasmic kinase BIK1 localizes to the nucleus and regulates defense hormone expression during plant innate immunity.</title>
        <authorList>
            <person name="Lal N.K."/>
            <person name="Nagalakshmi U."/>
            <person name="Hurlburt N.K."/>
            <person name="Flores R."/>
            <person name="Bak A."/>
            <person name="Sone P."/>
            <person name="Ma X."/>
            <person name="Song G."/>
            <person name="Walley J."/>
            <person name="Shan L."/>
            <person name="He P."/>
            <person name="Casteel C."/>
            <person name="Fisher A.J."/>
            <person name="Dinesh-Kumar S.P."/>
        </authorList>
    </citation>
    <scope>X-RAY CRYSTALLOGRAPHY (2.35 ANGSTROMS)</scope>
    <scope>SUBCELLULAR LOCATION</scope>
    <scope>FUNCTION</scope>
    <scope>MUTAGENESIS OF 89-SER-THR-90; THR-120 AND SER-129</scope>
    <scope>SUBUNIT</scope>
    <scope>INTERACTION WITH EFR</scope>
    <scope>PHOSPHORYLATION AT SER-89; THR-90; THR-120 AND SER-129</scope>
    <source>
        <strain>cv. Columbia</strain>
    </source>
</reference>
<sequence>MGSCFSSRVKADIFHNGKSSDLYGLSLSSRKSSSTVAAAQKTEGEILSSTPVKSFTFNELKLATRNFRPDSVIGEGGFGCVFKGWLDESTLTPTKPGTGLVIAVKKLNQEGFQGHREWLTEINYLGQLSHPNLVKLIGYCLEDEHRLLVYEFMQKGSLENHLFRRGAYFKPLPWFLRVNVALDAAKGLAFLHSDPVKVIYRDIKASNILLDADYNAKLSDFGLARDGPMGDLSYVSTRVMGTYGYAAPEYMSSGHLNARSDVYSFGVLLLEILSGKRALDHNRPAKEENLVDWARPYLTSKRKVLLIVDNRLDTQYLPEEAVRMASVAVQCLSFEPKSRPTMDQVVRALQQLQDNLGKPSQTNPVKDTKKLGFKTGTTKSSEKRFTQKPFGRHLV</sequence>
<keyword id="KW-0002">3D-structure</keyword>
<keyword id="KW-0067">ATP-binding</keyword>
<keyword id="KW-1003">Cell membrane</keyword>
<keyword id="KW-0967">Endosome</keyword>
<keyword id="KW-0391">Immunity</keyword>
<keyword id="KW-0399">Innate immunity</keyword>
<keyword id="KW-1017">Isopeptide bond</keyword>
<keyword id="KW-0418">Kinase</keyword>
<keyword id="KW-0449">Lipoprotein</keyword>
<keyword id="KW-0472">Membrane</keyword>
<keyword id="KW-0519">Myristate</keyword>
<keyword id="KW-0547">Nucleotide-binding</keyword>
<keyword id="KW-0539">Nucleus</keyword>
<keyword id="KW-0564">Palmitate</keyword>
<keyword id="KW-0597">Phosphoprotein</keyword>
<keyword id="KW-0611">Plant defense</keyword>
<keyword id="KW-1185">Reference proteome</keyword>
<keyword id="KW-0723">Serine/threonine-protein kinase</keyword>
<keyword id="KW-0808">Transferase</keyword>
<keyword id="KW-0832">Ubl conjugation</keyword>
<gene>
    <name evidence="24" type="primary">BIK1</name>
    <name evidence="27" type="ordered locus">At2g39660</name>
    <name evidence="29" type="ORF">F12L6.32</name>
    <name evidence="28" type="ORF">F17A14.3</name>
</gene>
<feature type="initiator methionine" description="Removed" evidence="26">
    <location>
        <position position="1"/>
    </location>
</feature>
<feature type="chain" id="PRO_0000311118" description="Serine/threonine-protein kinase BIK1">
    <location>
        <begin position="2"/>
        <end position="395"/>
    </location>
</feature>
<feature type="domain" description="Protein kinase" evidence="2">
    <location>
        <begin position="67"/>
        <end position="356"/>
    </location>
</feature>
<feature type="region of interest" description="Disordered" evidence="3">
    <location>
        <begin position="354"/>
        <end position="395"/>
    </location>
</feature>
<feature type="short sequence motif" description="Required for physical interaction with and phosphorylation of downstream signaling proteins (e.g. WRKY33, WRKY50, WRKY51 and WRKY57) to activate EFR-mediated immune signaling" evidence="19">
    <location>
        <begin position="89"/>
        <end position="90"/>
    </location>
</feature>
<feature type="compositionally biased region" description="Polar residues" evidence="3">
    <location>
        <begin position="354"/>
        <end position="365"/>
    </location>
</feature>
<feature type="active site" description="Proton acceptor" evidence="2">
    <location>
        <position position="202"/>
    </location>
</feature>
<feature type="binding site" evidence="2">
    <location>
        <begin position="73"/>
        <end position="81"/>
    </location>
    <ligand>
        <name>ATP</name>
        <dbReference type="ChEBI" id="CHEBI:30616"/>
    </ligand>
</feature>
<feature type="binding site" evidence="2">
    <location>
        <position position="105"/>
    </location>
    <ligand>
        <name>ATP</name>
        <dbReference type="ChEBI" id="CHEBI:30616"/>
    </ligand>
</feature>
<feature type="modified residue" description="Phosphoserine" evidence="20">
    <location>
        <position position="26"/>
    </location>
</feature>
<feature type="modified residue" description="Phosphoserine" evidence="20">
    <location>
        <position position="32"/>
    </location>
</feature>
<feature type="modified residue" description="Phosphoserine" evidence="20">
    <location>
        <position position="33"/>
    </location>
</feature>
<feature type="modified residue" description="Phosphoserine" evidence="20">
    <location>
        <position position="34"/>
    </location>
</feature>
<feature type="modified residue" description="Phosphothreonine" evidence="20">
    <location>
        <position position="35"/>
    </location>
</feature>
<feature type="modified residue" description="Phosphothreonine" evidence="20">
    <location>
        <position position="42"/>
    </location>
</feature>
<feature type="modified residue" description="Phosphoserine; by autocatalysis and BAK1" evidence="10">
    <location>
        <position position="48"/>
    </location>
</feature>
<feature type="modified residue" description="Phosphothreonine" evidence="20">
    <location>
        <position position="50"/>
    </location>
</feature>
<feature type="modified residue" description="Phosphoserine; by autocatalysis" evidence="10 20">
    <location>
        <position position="54"/>
    </location>
</feature>
<feature type="modified residue" description="Phosphothreonine; by autocatalysis" evidence="10 20">
    <location>
        <position position="56"/>
    </location>
</feature>
<feature type="modified residue" description="Phosphothreonine" evidence="20">
    <location>
        <position position="64"/>
    </location>
</feature>
<feature type="modified residue" description="Phosphoserine; by autocatalysis and BAK1" evidence="10 20">
    <location>
        <position position="71"/>
    </location>
</feature>
<feature type="modified residue" description="Phosphoserine; by EFR" evidence="19">
    <location>
        <position position="89"/>
    </location>
</feature>
<feature type="modified residue" description="Phosphothreonine; by EFR" evidence="19">
    <location>
        <position position="90"/>
    </location>
</feature>
<feature type="modified residue" description="Phosphothreonine; by EFR" evidence="19 20">
    <location>
        <position position="120"/>
    </location>
</feature>
<feature type="modified residue" description="Phosphoserine; by autocatalysis" evidence="10">
    <location>
        <position position="129"/>
    </location>
</feature>
<feature type="modified residue" description="Phosphoserine; by EFR" evidence="19">
    <location>
        <position position="129"/>
    </location>
</feature>
<feature type="modified residue" description="Phosphotyrosine" evidence="11">
    <location>
        <position position="150"/>
    </location>
</feature>
<feature type="modified residue" description="Phosphotyrosine; by autocatalysis" evidence="10 20">
    <location>
        <position position="168"/>
    </location>
</feature>
<feature type="modified residue" description="Phosphoserine" evidence="20">
    <location>
        <position position="193"/>
    </location>
</feature>
<feature type="modified residue" description="Phosphoserine; by autocatalysis and BAK1" evidence="10 20">
    <location>
        <position position="206"/>
    </location>
</feature>
<feature type="modified residue" description="Phosphotyrosine; by autocatalysis" evidence="10">
    <location>
        <position position="214"/>
    </location>
</feature>
<feature type="modified residue" description="Phosphoserine" evidence="20">
    <location>
        <position position="219"/>
    </location>
</feature>
<feature type="modified residue" description="Phosphoserine; by autocatalysis" evidence="8 10 20">
    <location>
        <position position="233"/>
    </location>
</feature>
<feature type="modified residue" description="O-UMP-serine; by Xanthomonas campestris effector XopAC/AvrAC; alternate" evidence="7">
    <location>
        <position position="236"/>
    </location>
</feature>
<feature type="modified residue" description="Phosphoserine; by autocatalysis and BAK1; alternate" evidence="6 8 10 20">
    <location>
        <position position="236"/>
    </location>
</feature>
<feature type="modified residue" description="O-UMP-threonine; by Xanthomonas campestris effector XopAC/AvrAC; alternate" evidence="7">
    <location>
        <position position="237"/>
    </location>
</feature>
<feature type="modified residue" description="Phosphothreonine; by autocatalysis and BAK1; alternate" evidence="5 8 10">
    <location>
        <position position="237"/>
    </location>
</feature>
<feature type="modified residue" description="Phosphothreonine; by autocatalysis and BAK1" evidence="10">
    <location>
        <position position="242"/>
    </location>
</feature>
<feature type="modified residue" description="Phosphotyrosine" evidence="11">
    <location>
        <position position="243"/>
    </location>
</feature>
<feature type="modified residue" description="Phosphotyrosine; by autocatalysis" evidence="10 11">
    <location>
        <position position="250"/>
    </location>
</feature>
<feature type="modified residue" description="Phosphoserine; by autocatalysis" evidence="10">
    <location>
        <position position="252"/>
    </location>
</feature>
<feature type="modified residue" description="Phosphoserine; by autocatalysis" evidence="10">
    <location>
        <position position="253"/>
    </location>
</feature>
<feature type="modified residue" description="Phosphothreonine; by autocatalysis" evidence="10 20">
    <location>
        <position position="314"/>
    </location>
</feature>
<feature type="modified residue" description="Phosphothreonine" evidence="20">
    <location>
        <position position="341"/>
    </location>
</feature>
<feature type="modified residue" description="Phosphoserine; by autocatalysis and BAK1" evidence="10 20">
    <location>
        <position position="360"/>
    </location>
</feature>
<feature type="modified residue" description="Phosphothreonine; by autocatalysis and BAK1" evidence="10 20">
    <location>
        <position position="362"/>
    </location>
</feature>
<feature type="modified residue" description="Phosphothreonine; by autocatalysis and BAK1" evidence="10 20">
    <location>
        <position position="368"/>
    </location>
</feature>
<feature type="modified residue" description="Phosphothreonine" evidence="20">
    <location>
        <position position="375"/>
    </location>
</feature>
<feature type="modified residue" description="Phosphothreonine" evidence="20">
    <location>
        <position position="377"/>
    </location>
</feature>
<feature type="lipid moiety-binding region" description="N-myristoyl glycine" evidence="26">
    <location>
        <position position="2"/>
    </location>
</feature>
<feature type="lipid moiety-binding region" description="S-palmitoyl cysteine" evidence="1">
    <location>
        <position position="4"/>
    </location>
</feature>
<feature type="cross-link" description="Glycyl lysine isopeptide (Lys-Gly) (interchain with G-Cter in ubiquitin)" evidence="21">
    <location>
        <position position="31"/>
    </location>
</feature>
<feature type="cross-link" description="Glycyl lysine isopeptide (Lys-Gly) (interchain with G-Cter in ubiquitin)" evidence="21">
    <location>
        <position position="41"/>
    </location>
</feature>
<feature type="cross-link" description="Glycyl lysine isopeptide (Lys-Gly) (interchain with G-Cter in ubiquitin)" evidence="21">
    <location>
        <position position="95"/>
    </location>
</feature>
<feature type="cross-link" description="Glycyl lysine isopeptide (Lys-Gly) (interchain with G-Cter in ubiquitin)" evidence="21">
    <location>
        <position position="170"/>
    </location>
</feature>
<feature type="cross-link" description="Glycyl lysine isopeptide (Lys-Gly) (interchain with G-Cter in ubiquitin)" evidence="21">
    <location>
        <position position="186"/>
    </location>
</feature>
<feature type="cross-link" description="Glycyl lysine isopeptide (Lys-Gly) (interchain with G-Cter in ubiquitin)" evidence="21">
    <location>
        <position position="286"/>
    </location>
</feature>
<feature type="cross-link" description="Glycyl lysine isopeptide (Lys-Gly) (interchain with G-Cter in ubiquitin)" evidence="21">
    <location>
        <position position="337"/>
    </location>
</feature>
<feature type="cross-link" description="Glycyl lysine isopeptide (Lys-Gly) (interchain with G-Cter in ubiquitin)" evidence="21">
    <location>
        <position position="358"/>
    </location>
</feature>
<feature type="cross-link" description="Glycyl lysine isopeptide (Lys-Gly) (interchain with G-Cter in ubiquitin)" evidence="21">
    <location>
        <position position="366"/>
    </location>
</feature>
<feature type="mutagenesis site" description="Mis-localization and impaired phosphorylation and ubiquitination upon flagellin (flg22) treatment, but conserved kinase activity and autophosphorylation." evidence="13 21">
    <original>G</original>
    <variation>A</variation>
    <location>
        <position position="2"/>
    </location>
</feature>
<feature type="mutagenesis site" description="Drastic reduction of plasma membrane localization and strong increase of cytoplasmic localization." evidence="15">
    <original>G</original>
    <variation>S</variation>
    <location>
        <position position="2"/>
    </location>
</feature>
<feature type="mutagenesis site" description="Impaired flg22-induced ubiquination, internalization of BIK1 and FLS2 from the plasma membrane and reactive oxygen species (ROS) production, as well as enhanced susceptibilitye to the bacterial pathogen Pseudomonas syringae pv. tomato (Pst) DC3000 and to the fungal pathogen Botrytis cinerea, but normal phosphorylation; when associated with R-41, R-95, R-170, R-186, R-286, R-337, R-358 and R-366." evidence="21">
    <original>K</original>
    <variation>R</variation>
    <location>
        <position position="31"/>
    </location>
</feature>
<feature type="mutagenesis site" description="Impaired flg22-induced ubiquination, internalization of BIK1 and FLS2 from the plasma membrane and reactive oxygen species (ROS) production, as well as enhanced susceptibilitye to the bacterial pathogen Pseudomonas syringae pv. tomato (Pst) DC3000 and to the fungal pathogen Botrytis cinerea, but normal phosphorylation; when associated with R-31, R-95, R-170, R-186, R-286, R-337, R-358 and R-366." evidence="21">
    <original>K</original>
    <variation>R</variation>
    <location>
        <position position="41"/>
    </location>
</feature>
<feature type="mutagenesis site" description="Impaired sensitivity toward elf18-mediated growth inhibition and increased sensitivity to Pseudomonas syringae pv. tomato (Pst) DC3000 bacteria, but no growth defect in normal conditions and normal mitogen-activated protein kinases (MAPKs) activation during EFR-mediated signaling. Enhanced interaction with the WRKY transcription factors WRKY33, WRKY50, WRKY51 and WRKY57 involved in the regulation of jasmonic acid (JA) and salicylic acid (SA) biosynthesis." evidence="19">
    <original>ST</original>
    <variation>AA</variation>
    <location>
        <begin position="89"/>
        <end position="90"/>
    </location>
</feature>
<feature type="mutagenesis site" description="Phosphomimetic, associated with an increased sensitivity toward elf18-mediated growth inhibition and an enhanced resistance to Pseudomonas syringae pv. tomato (Pst) DC3000 bacteria despite a normal mitogen-activated protein kinases (MAPKs) activation during EFR-mediated signaling. Growth defect in normal conditions. Reduced interaction with EFR. Increased jasmonic acid (JA) and salicylic acid (SA) levels. Reduced interaction with and phosphorylation of the WRKY transcription factors WRKY33, WRKY50, WRKY51 and WRKY57 involved in the regulation of jasmonic acid (JA) and salicylic acid (SA) biosynthesis." evidence="19">
    <original>ST</original>
    <variation>DD</variation>
    <location>
        <begin position="89"/>
        <end position="90"/>
    </location>
</feature>
<feature type="mutagenesis site" description="Impaired flg22-induced ubiquination, internalization of BIK1 and FLS2 from the plasma membrane and reactive oxygen species (ROS) production, as well as enhanced susceptibilitye to the bacterial pathogen Pseudomonas syringae pv. tomato (Pst) DC3000 and to the fungal pathogen Botrytis cinerea, but normal phosphorylation; when associated with R-31, R-41, R-170, R-186, R-286, R-337, R-358 and R-366." evidence="21">
    <original>K</original>
    <variation>R</variation>
    <location>
        <position position="95"/>
    </location>
</feature>
<feature type="mutagenesis site" description="Loss of kinase activity; when associated with A-106." evidence="20">
    <original>K</original>
    <variation>A</variation>
    <location>
        <position position="105"/>
    </location>
</feature>
<feature type="mutagenesis site" description="Loss of autophosphorylation." evidence="8">
    <original>K</original>
    <variation>E</variation>
    <location>
        <position position="105"/>
    </location>
</feature>
<feature type="mutagenesis site" description="Loss of kinase activity; when associated with A-105." evidence="20">
    <original>K</original>
    <variation>A</variation>
    <location>
        <position position="106"/>
    </location>
</feature>
<feature type="mutagenesis site" description="Impaired kinase activity." evidence="21">
    <original>K</original>
    <variation>R</variation>
    <location>
        <position position="106"/>
    </location>
</feature>
<feature type="mutagenesis site" description="Normal sensitivity toward elf18-mediated growth inhibition. Normal sensitivity toward elf18-mediated growth inhibition; when associated with A-129." evidence="19">
    <original>T</original>
    <variation>A</variation>
    <location>
        <position position="120"/>
    </location>
</feature>
<feature type="mutagenesis site" description="Normal sensitivity toward elf18-mediated growth inhibition. Normal sensitivity toward elf18-mediated growth inhibition; when associated with A-120." evidence="19">
    <original>S</original>
    <variation>A</variation>
    <location>
        <position position="129"/>
    </location>
</feature>
<feature type="mutagenesis site" description="Loss of function in innate immunity." evidence="11">
    <original>Y</original>
    <variation>F</variation>
    <location>
        <position position="150"/>
    </location>
</feature>
<feature type="mutagenesis site" description="Impaired flg22-induced ubiquination, internalization of BIK1 and FLS2 from the plasma membrane and reactive oxygen species (ROS) production, as well as enhanced susceptibilitye to the bacterial pathogen Pseudomonas syringae pv. tomato (Pst) DC3000 and to the fungal pathogen Botrytis cinerea, but normal phosphorylation; when associated with R-31, R-41, R-95, R-186, R-286, R-337, R-358 and R-366." evidence="21">
    <original>K</original>
    <variation>R</variation>
    <location>
        <position position="170"/>
    </location>
</feature>
<feature type="mutagenesis site" description="Impaired flg22-induced ubiquination, internalization of BIK1 and FLS2 from the plasma membrane and reactive oxygen species (ROS) production, as well as enhanced susceptibilitye to the bacterial pathogen Pseudomonas syringae pv. tomato (Pst) DC3000 and to the fungal pathogen Botrytis cinerea, but normal phosphorylation; when associated with R-31, R-41, R-95, R-170, R-286, R-337, R-358 and R-366." evidence="21">
    <original>K</original>
    <variation>R</variation>
    <location>
        <position position="186"/>
    </location>
</feature>
<feature type="mutagenesis site" description="Abolishes kinase activity." evidence="10">
    <original>D</original>
    <variation>A</variation>
    <location>
        <position position="202"/>
    </location>
</feature>
<feature type="mutagenesis site" description="Compromised flg22-induced ubiquitination and reduced phosphorylation." evidence="21">
    <original>K</original>
    <variation>R</variation>
    <location>
        <position position="204"/>
    </location>
</feature>
<feature type="mutagenesis site" description="Compromised flg22-induced ubiquitination." evidence="21">
    <original>T</original>
    <variation>A</variation>
    <location>
        <position position="237"/>
    </location>
</feature>
<feature type="mutagenesis site" description="Loss of function in innate immunity." evidence="11">
    <original>Y</original>
    <variation>F</variation>
    <location>
        <position position="243"/>
    </location>
</feature>
<feature type="mutagenesis site" description="Compromised flg22-induced ubiquitination." evidence="21">
    <original>Y</original>
    <variation>A</variation>
    <location>
        <position position="250"/>
    </location>
</feature>
<feature type="mutagenesis site" description="Loss of function in innate immunity." evidence="11">
    <original>Y</original>
    <variation>F</variation>
    <location>
        <position position="250"/>
    </location>
</feature>
<feature type="mutagenesis site" description="Impaired flg22-induced ubiquination, internalization of BIK1 and FLS2 from the plasma membrane and reactive oxygen species (ROS) production, as well as enhanced susceptibilitye to the bacterial pathogen Pseudomonas syringae pv. tomato (Pst) DC3000 and to the fungal pathogen Botrytis cinerea, but normal phosphorylation; when associated with R-31, R-41, R-95, R-170, R-186, R-337, R-358 and R-366." evidence="21">
    <original>K</original>
    <variation>R</variation>
    <location>
        <position position="286"/>
    </location>
</feature>
<feature type="mutagenesis site" description="Impaired flg22-induced ubiquination, internalization of BIK1 and FLS2 from the plasma membrane and reactive oxygen species (ROS) production, as well as enhanced susceptibilitye to the bacterial pathogen Pseudomonas syringae pv. tomato (Pst) DC3000 and to the fungal pathogen Botrytis cinerea, but normal phosphorylation; when associated with R-31, R-41, R-95, R-170, R-186, R-286, R-358 and R-366." evidence="21">
    <original>K</original>
    <variation>R</variation>
    <location>
        <position position="337"/>
    </location>
</feature>
<feature type="mutagenesis site" description="Impaired flg22-induced ubiquination, internalization of BIK1 and FLS2 from the plasma membrane and reactive oxygen species (ROS) production, as well as enhanced susceptibilitye to the bacterial pathogen Pseudomonas syringae pv. tomato (Pst) DC3000 and to the fungal pathogen Botrytis cinerea, but normal phosphorylation; when associated with R-31, R-41, R-95, R-170, R-186, R-286, R-337 and R-366." evidence="21">
    <original>K</original>
    <variation>R</variation>
    <location>
        <position position="358"/>
    </location>
</feature>
<feature type="mutagenesis site" description="Impaired flg22-induced ubiquination, internalization of BIK1 and FLS2 from the plasma membrane and reactive oxygen species (ROS) production, as well as enhanced susceptibilitye to the bacterial pathogen Pseudomonas syringae pv. tomato (Pst) DC3000 and to the fungal pathogen Botrytis cinerea, but normal phosphorylation; when associated with R-31, R-41, R-95, R-170, R-186, R-286, R-337 and R-358." evidence="21">
    <original>K</original>
    <variation>R</variation>
    <location>
        <position position="366"/>
    </location>
</feature>
<feature type="strand" evidence="30">
    <location>
        <begin position="53"/>
        <end position="55"/>
    </location>
</feature>
<feature type="helix" evidence="30">
    <location>
        <begin position="57"/>
        <end position="63"/>
    </location>
</feature>
<feature type="turn" evidence="30">
    <location>
        <begin position="64"/>
        <end position="67"/>
    </location>
</feature>
<feature type="strand" evidence="30">
    <location>
        <begin position="82"/>
        <end position="86"/>
    </location>
</feature>
<feature type="turn" evidence="30">
    <location>
        <begin position="88"/>
        <end position="90"/>
    </location>
</feature>
<feature type="strand" evidence="30">
    <location>
        <begin position="98"/>
        <end position="106"/>
    </location>
</feature>
<feature type="helix" evidence="30">
    <location>
        <begin position="115"/>
        <end position="126"/>
    </location>
</feature>
<feature type="strand" evidence="30">
    <location>
        <begin position="136"/>
        <end position="144"/>
    </location>
</feature>
<feature type="strand" evidence="30">
    <location>
        <begin position="146"/>
        <end position="151"/>
    </location>
</feature>
<feature type="helix" evidence="30">
    <location>
        <begin position="158"/>
        <end position="161"/>
    </location>
</feature>
<feature type="helix" evidence="30">
    <location>
        <begin position="174"/>
        <end position="192"/>
    </location>
</feature>
<feature type="turn" evidence="30">
    <location>
        <begin position="194"/>
        <end position="196"/>
    </location>
</feature>
<feature type="helix" evidence="30">
    <location>
        <begin position="205"/>
        <end position="207"/>
    </location>
</feature>
<feature type="strand" evidence="30">
    <location>
        <begin position="208"/>
        <end position="210"/>
    </location>
</feature>
<feature type="strand" evidence="30">
    <location>
        <begin position="216"/>
        <end position="218"/>
    </location>
</feature>
<feature type="helix" evidence="30">
    <location>
        <begin position="248"/>
        <end position="253"/>
    </location>
</feature>
<feature type="helix" evidence="30">
    <location>
        <begin position="258"/>
        <end position="274"/>
    </location>
</feature>
<feature type="helix" evidence="30">
    <location>
        <begin position="290"/>
        <end position="294"/>
    </location>
</feature>
<feature type="helix" evidence="30">
    <location>
        <begin position="295"/>
        <end position="297"/>
    </location>
</feature>
<feature type="helix" evidence="30">
    <location>
        <begin position="301"/>
        <end position="305"/>
    </location>
</feature>
<feature type="helix" evidence="30">
    <location>
        <begin position="310"/>
        <end position="312"/>
    </location>
</feature>
<feature type="turn" evidence="30">
    <location>
        <begin position="313"/>
        <end position="315"/>
    </location>
</feature>
<feature type="helix" evidence="30">
    <location>
        <begin position="318"/>
        <end position="331"/>
    </location>
</feature>
<feature type="helix" evidence="30">
    <location>
        <begin position="336"/>
        <end position="338"/>
    </location>
</feature>
<feature type="helix" evidence="30">
    <location>
        <begin position="342"/>
        <end position="354"/>
    </location>
</feature>
<feature type="turn" evidence="30">
    <location>
        <begin position="355"/>
        <end position="357"/>
    </location>
</feature>
<protein>
    <recommendedName>
        <fullName evidence="25">Serine/threonine-protein kinase BIK1</fullName>
        <ecNumber evidence="10 22">2.7.11.1</ecNumber>
    </recommendedName>
    <alternativeName>
        <fullName evidence="24">Protein BOTRYTIS-INDUCED KINASE 1</fullName>
    </alternativeName>
</protein>
<dbReference type="EC" id="2.7.11.1" evidence="10 22"/>
<dbReference type="EMBL" id="AC003674">
    <property type="protein sequence ID" value="AAB97121.1"/>
    <property type="molecule type" value="Genomic_DNA"/>
</dbReference>
<dbReference type="EMBL" id="AC004218">
    <property type="protein sequence ID" value="AAM14921.1"/>
    <property type="molecule type" value="Genomic_DNA"/>
</dbReference>
<dbReference type="EMBL" id="CP002685">
    <property type="protein sequence ID" value="AEC09703.1"/>
    <property type="molecule type" value="Genomic_DNA"/>
</dbReference>
<dbReference type="EMBL" id="AF325086">
    <property type="protein sequence ID" value="AAK17154.1"/>
    <property type="molecule type" value="mRNA"/>
</dbReference>
<dbReference type="EMBL" id="AY062493">
    <property type="protein sequence ID" value="AAL32571.1"/>
    <property type="molecule type" value="mRNA"/>
</dbReference>
<dbReference type="EMBL" id="AY065029">
    <property type="protein sequence ID" value="AAL57667.1"/>
    <property type="molecule type" value="mRNA"/>
</dbReference>
<dbReference type="EMBL" id="AY093278">
    <property type="protein sequence ID" value="AAM13277.1"/>
    <property type="molecule type" value="mRNA"/>
</dbReference>
<dbReference type="EMBL" id="AY093997">
    <property type="protein sequence ID" value="AAM16258.1"/>
    <property type="molecule type" value="mRNA"/>
</dbReference>
<dbReference type="PIR" id="T00574">
    <property type="entry name" value="T00574"/>
</dbReference>
<dbReference type="RefSeq" id="NP_181496.1">
    <property type="nucleotide sequence ID" value="NM_129522.5"/>
</dbReference>
<dbReference type="PDB" id="5TOS">
    <property type="method" value="X-ray"/>
    <property type="resolution" value="2.35 A"/>
    <property type="chains" value="A/B=1-395"/>
</dbReference>
<dbReference type="PDBsum" id="5TOS"/>
<dbReference type="SMR" id="O48814"/>
<dbReference type="BioGRID" id="3887">
    <property type="interactions" value="7"/>
</dbReference>
<dbReference type="DIP" id="DIP-51510N"/>
<dbReference type="FunCoup" id="O48814">
    <property type="interactions" value="2518"/>
</dbReference>
<dbReference type="IntAct" id="O48814">
    <property type="interactions" value="4"/>
</dbReference>
<dbReference type="STRING" id="3702.O48814"/>
<dbReference type="iPTMnet" id="O48814"/>
<dbReference type="PaxDb" id="3702-AT2G39660.1"/>
<dbReference type="ProteomicsDB" id="240422"/>
<dbReference type="EnsemblPlants" id="AT2G39660.1">
    <property type="protein sequence ID" value="AT2G39660.1"/>
    <property type="gene ID" value="AT2G39660"/>
</dbReference>
<dbReference type="GeneID" id="818549"/>
<dbReference type="Gramene" id="AT2G39660.1">
    <property type="protein sequence ID" value="AT2G39660.1"/>
    <property type="gene ID" value="AT2G39660"/>
</dbReference>
<dbReference type="KEGG" id="ath:AT2G39660"/>
<dbReference type="Araport" id="AT2G39660"/>
<dbReference type="TAIR" id="AT2G39660">
    <property type="gene designation" value="BIK1"/>
</dbReference>
<dbReference type="eggNOG" id="KOG1187">
    <property type="taxonomic scope" value="Eukaryota"/>
</dbReference>
<dbReference type="HOGENOM" id="CLU_000288_21_1_1"/>
<dbReference type="InParanoid" id="O48814"/>
<dbReference type="OMA" id="LHIMDQR"/>
<dbReference type="OrthoDB" id="4062651at2759"/>
<dbReference type="PhylomeDB" id="O48814"/>
<dbReference type="PRO" id="PR:O48814"/>
<dbReference type="Proteomes" id="UP000006548">
    <property type="component" value="Chromosome 2"/>
</dbReference>
<dbReference type="ExpressionAtlas" id="O48814">
    <property type="expression patterns" value="baseline and differential"/>
</dbReference>
<dbReference type="GO" id="GO:0005737">
    <property type="term" value="C:cytoplasm"/>
    <property type="evidence" value="ECO:0007005"/>
    <property type="project" value="TAIR"/>
</dbReference>
<dbReference type="GO" id="GO:0012505">
    <property type="term" value="C:endomembrane system"/>
    <property type="evidence" value="ECO:0000314"/>
    <property type="project" value="UniProtKB"/>
</dbReference>
<dbReference type="GO" id="GO:0005768">
    <property type="term" value="C:endosome"/>
    <property type="evidence" value="ECO:0000314"/>
    <property type="project" value="UniProtKB"/>
</dbReference>
<dbReference type="GO" id="GO:0010008">
    <property type="term" value="C:endosome membrane"/>
    <property type="evidence" value="ECO:0007669"/>
    <property type="project" value="UniProtKB-SubCell"/>
</dbReference>
<dbReference type="GO" id="GO:0005794">
    <property type="term" value="C:Golgi apparatus"/>
    <property type="evidence" value="ECO:0007005"/>
    <property type="project" value="TAIR"/>
</dbReference>
<dbReference type="GO" id="GO:0005730">
    <property type="term" value="C:nucleolus"/>
    <property type="evidence" value="ECO:0007005"/>
    <property type="project" value="TAIR"/>
</dbReference>
<dbReference type="GO" id="GO:0005634">
    <property type="term" value="C:nucleus"/>
    <property type="evidence" value="ECO:0000314"/>
    <property type="project" value="UniProtKB"/>
</dbReference>
<dbReference type="GO" id="GO:0005886">
    <property type="term" value="C:plasma membrane"/>
    <property type="evidence" value="ECO:0000314"/>
    <property type="project" value="UniProtKB"/>
</dbReference>
<dbReference type="GO" id="GO:0005524">
    <property type="term" value="F:ATP binding"/>
    <property type="evidence" value="ECO:0007669"/>
    <property type="project" value="UniProtKB-KW"/>
</dbReference>
<dbReference type="GO" id="GO:0016301">
    <property type="term" value="F:kinase activity"/>
    <property type="evidence" value="ECO:0000314"/>
    <property type="project" value="TAIR"/>
</dbReference>
<dbReference type="GO" id="GO:0106310">
    <property type="term" value="F:protein serine kinase activity"/>
    <property type="evidence" value="ECO:0007669"/>
    <property type="project" value="RHEA"/>
</dbReference>
<dbReference type="GO" id="GO:0004674">
    <property type="term" value="F:protein serine/threonine kinase activity"/>
    <property type="evidence" value="ECO:0000314"/>
    <property type="project" value="TAIR"/>
</dbReference>
<dbReference type="GO" id="GO:0042742">
    <property type="term" value="P:defense response to bacterium"/>
    <property type="evidence" value="ECO:0000315"/>
    <property type="project" value="UniProtKB"/>
</dbReference>
<dbReference type="GO" id="GO:0050832">
    <property type="term" value="P:defense response to fungus"/>
    <property type="evidence" value="ECO:0000315"/>
    <property type="project" value="UniProtKB"/>
</dbReference>
<dbReference type="GO" id="GO:0045087">
    <property type="term" value="P:innate immune response"/>
    <property type="evidence" value="ECO:0007669"/>
    <property type="project" value="UniProtKB-KW"/>
</dbReference>
<dbReference type="GO" id="GO:0002221">
    <property type="term" value="P:pattern recognition receptor signaling pathway"/>
    <property type="evidence" value="ECO:0000315"/>
    <property type="project" value="UniProtKB"/>
</dbReference>
<dbReference type="GO" id="GO:0046777">
    <property type="term" value="P:protein autophosphorylation"/>
    <property type="evidence" value="ECO:0000314"/>
    <property type="project" value="TAIR"/>
</dbReference>
<dbReference type="GO" id="GO:0006468">
    <property type="term" value="P:protein phosphorylation"/>
    <property type="evidence" value="ECO:0000314"/>
    <property type="project" value="TAIR"/>
</dbReference>
<dbReference type="GO" id="GO:1900424">
    <property type="term" value="P:regulation of defense response to bacterium"/>
    <property type="evidence" value="ECO:0000315"/>
    <property type="project" value="UniProtKB"/>
</dbReference>
<dbReference type="GO" id="GO:0080141">
    <property type="term" value="P:regulation of jasmonic acid biosynthetic process"/>
    <property type="evidence" value="ECO:0000315"/>
    <property type="project" value="UniProtKB"/>
</dbReference>
<dbReference type="GO" id="GO:0080142">
    <property type="term" value="P:regulation of salicylic acid biosynthetic process"/>
    <property type="evidence" value="ECO:0000315"/>
    <property type="project" value="UniProtKB"/>
</dbReference>
<dbReference type="GO" id="GO:0010119">
    <property type="term" value="P:regulation of stomatal movement"/>
    <property type="evidence" value="ECO:0000316"/>
    <property type="project" value="TAIR"/>
</dbReference>
<dbReference type="GO" id="GO:0009620">
    <property type="term" value="P:response to fungus"/>
    <property type="evidence" value="ECO:0000270"/>
    <property type="project" value="TAIR"/>
</dbReference>
<dbReference type="GO" id="GO:0002237">
    <property type="term" value="P:response to molecule of bacterial origin"/>
    <property type="evidence" value="ECO:0000314"/>
    <property type="project" value="UniProtKB"/>
</dbReference>
<dbReference type="CDD" id="cd14066">
    <property type="entry name" value="STKc_IRAK"/>
    <property type="match status" value="1"/>
</dbReference>
<dbReference type="FunFam" id="1.10.510.10:FF:000258">
    <property type="entry name" value="Probable serine/threonine-protein kinase PBL8"/>
    <property type="match status" value="1"/>
</dbReference>
<dbReference type="FunFam" id="3.30.200.20:FF:000228">
    <property type="entry name" value="Serine/threonine-protein kinase BIK1"/>
    <property type="match status" value="1"/>
</dbReference>
<dbReference type="Gene3D" id="3.30.200.20">
    <property type="entry name" value="Phosphorylase Kinase, domain 1"/>
    <property type="match status" value="1"/>
</dbReference>
<dbReference type="Gene3D" id="1.10.510.10">
    <property type="entry name" value="Transferase(Phosphotransferase) domain 1"/>
    <property type="match status" value="1"/>
</dbReference>
<dbReference type="InterPro" id="IPR011009">
    <property type="entry name" value="Kinase-like_dom_sf"/>
</dbReference>
<dbReference type="InterPro" id="IPR050823">
    <property type="entry name" value="Plant_Ser_Thr_Prot_Kinase"/>
</dbReference>
<dbReference type="InterPro" id="IPR000719">
    <property type="entry name" value="Prot_kinase_dom"/>
</dbReference>
<dbReference type="InterPro" id="IPR017441">
    <property type="entry name" value="Protein_kinase_ATP_BS"/>
</dbReference>
<dbReference type="InterPro" id="IPR001245">
    <property type="entry name" value="Ser-Thr/Tyr_kinase_cat_dom"/>
</dbReference>
<dbReference type="InterPro" id="IPR008271">
    <property type="entry name" value="Ser/Thr_kinase_AS"/>
</dbReference>
<dbReference type="PANTHER" id="PTHR45621">
    <property type="entry name" value="OS01G0588500 PROTEIN-RELATED"/>
    <property type="match status" value="1"/>
</dbReference>
<dbReference type="Pfam" id="PF07714">
    <property type="entry name" value="PK_Tyr_Ser-Thr"/>
    <property type="match status" value="1"/>
</dbReference>
<dbReference type="SMART" id="SM00220">
    <property type="entry name" value="S_TKc"/>
    <property type="match status" value="1"/>
</dbReference>
<dbReference type="SUPFAM" id="SSF56112">
    <property type="entry name" value="Protein kinase-like (PK-like)"/>
    <property type="match status" value="1"/>
</dbReference>
<dbReference type="PROSITE" id="PS00107">
    <property type="entry name" value="PROTEIN_KINASE_ATP"/>
    <property type="match status" value="1"/>
</dbReference>
<dbReference type="PROSITE" id="PS50011">
    <property type="entry name" value="PROTEIN_KINASE_DOM"/>
    <property type="match status" value="1"/>
</dbReference>
<dbReference type="PROSITE" id="PS00108">
    <property type="entry name" value="PROTEIN_KINASE_ST"/>
    <property type="match status" value="1"/>
</dbReference>
<name>BIK1_ARATH</name>
<comment type="function">
    <text evidence="4 5 6 7 8 9 10 12 13 15 19 20 21 22 23 25">Plays a central role in immune responses (PubMed:20413097, PubMed:32846426, PubMed:29649442). Required to activate the resistance responses to necrotrophic pathogens, including the regulation of defense hormone expression (e.g. jasmonic acid (JA) and salicylic acid (SA)) (PubMed:16339855, PubMed:29649442). Phosphorylates FLS2 and BAK1 (PubMed:20404519, PubMed:24104392). Involved in pathogen-associated molecular pattern (PAMP)-triggered immunity (PTI) signaling, including calcium signaling, and defense responses downstream of FLS2; upon PAMP recognition, first phosphorylated by FLS2 and SIK1 prior to being monoubiquitinated by ATL44/RHA3A and ATL45/RHA3B at the plasma membrane, then internalized dynamically into endocytic compartments together with FLS2 (PubMed:20413097, PubMed:25522736, PubMed:30212650, PubMed:32404997). Acts additively with PBL1 in PTI defenses (PubMed:20413097). Acts as a positive regulator of the PAMP flg22-induced increase of cytosolic calcium (PubMed:24629339, PubMed:32846426). Upon flg22 perception, phosphorylates and activates the calcium-permeable channel OSCA1.3, promoting stomatal closure (PubMed:32846426). Phosphorylates the NADPH oxidase RBOHD at specific sites in a calcium-independent manner to enhance reactive oxygen species (ROS) generation upon flg22 perception (PubMed:24629339). ROS production in response to flg22 controls stomatal movement and restriction of bacterial entry into leaf tissues (PubMed:24629339). Seems not required for flg22-induced MAPK activation (PubMed:22504181). Required for Pep1-induced defenses. Pep1 is an endogenous elicitor that potentiates PAMP-inducible plant responses. In association with PEPR1, acts downstream of the canonical ethylene signaling cascade to regulate ethylene responses (PubMed:23431184). Involved in ethylene signaling. Destabilizes EIN3, the key transcription activator in ethylene signaling, and represses EIN3-dependent transcription (PubMed:26021844). Acts as a negative regulator in brassinosteroid (BR) signaling. Functions in BR signaling by direct interaction with the BR receptor BRI1 cytosolic kinase domain (PubMed:23818580). Required during SCOOP small peptides (e.g. SCOOP10 and SCOOP12) perception and signaling; receptor-like cytosolic kinases (RLCK) activated by BAK1/SERK3 and SERK4 coreceptors when associated with MIK2 upon the perception of SCOOP peptides (PubMed:34535661).</text>
</comment>
<comment type="function">
    <text evidence="16">(Microbial infection) Xanthomonas campestris effector AvrAC/XopAC-mediated uridylylation prevents activation by phosphorylation at the same residues, thus affecting immune responses and reducing defense responses toward X.campestris, mediating avrAC/XopAC virulence functions.</text>
</comment>
<comment type="catalytic activity">
    <reaction evidence="10 22">
        <text>L-seryl-[protein] + ATP = O-phospho-L-seryl-[protein] + ADP + H(+)</text>
        <dbReference type="Rhea" id="RHEA:17989"/>
        <dbReference type="Rhea" id="RHEA-COMP:9863"/>
        <dbReference type="Rhea" id="RHEA-COMP:11604"/>
        <dbReference type="ChEBI" id="CHEBI:15378"/>
        <dbReference type="ChEBI" id="CHEBI:29999"/>
        <dbReference type="ChEBI" id="CHEBI:30616"/>
        <dbReference type="ChEBI" id="CHEBI:83421"/>
        <dbReference type="ChEBI" id="CHEBI:456216"/>
        <dbReference type="EC" id="2.7.11.1"/>
    </reaction>
</comment>
<comment type="catalytic activity">
    <reaction evidence="10">
        <text>L-threonyl-[protein] + ATP = O-phospho-L-threonyl-[protein] + ADP + H(+)</text>
        <dbReference type="Rhea" id="RHEA:46608"/>
        <dbReference type="Rhea" id="RHEA-COMP:11060"/>
        <dbReference type="Rhea" id="RHEA-COMP:11605"/>
        <dbReference type="ChEBI" id="CHEBI:15378"/>
        <dbReference type="ChEBI" id="CHEBI:30013"/>
        <dbReference type="ChEBI" id="CHEBI:30616"/>
        <dbReference type="ChEBI" id="CHEBI:61977"/>
        <dbReference type="ChEBI" id="CHEBI:456216"/>
        <dbReference type="EC" id="2.7.11.1"/>
    </reaction>
</comment>
<comment type="activity regulation">
    <text evidence="17">Kinase activation is repressed by the phosphatase PP2C38.</text>
</comment>
<comment type="subunit">
    <text evidence="5 6 7 8 9 12 14 17 19 20 21">Interacts with FLS2 (PubMed:20404519, PubMed:20413097). Activation of FLS2 by flagellin (flg22) induces the dissociation of the complex (PubMed:20413097, PubMed:32404997). Interacts with BAK1 (PubMed:20404519). Interacts with the Xanthomonas campestris effector XopAC/AvrAC (PubMed:22504181). Interacts with CPK28 (PubMed:25525792). Interacts with PEPR1 (PubMed:23431184). Interacts with PP2C38 (PubMed:27494702). Interacts with BRI1 (PubMed:23818580). Interacts with RBOHD (PubMed:24629339). Binds to EFR when not phosphorylated at Ser-89 and Thr-90, in the absence of pathogen elicitor; dissociates upon pathogen-associated molecular pattern (PAMP)-triggered activation by EFR-mediated phosphorylation (PubMed:29649442). Interacts directly with and phosphorylates WRKY transcription factors in the nucleus involved in the jasmonic acid (JA) and salicylic acid (SA) regulation (e.g. WRKY33, WRKY50, WRKY51 and WRKY57) to modulate defense hormones during plant immunity (PubMed:29649442). Binds to ATL44/RHA3A and ATL45/RHA3B (PubMed:32404997). Binds to SIK1 to be phosphorylated and stabilized (PubMed:30212650).</text>
</comment>
<comment type="interaction">
    <interactant intactId="EBI-1238176">
        <id>O48814</id>
    </interactant>
    <interactant intactId="EBI-617138">
        <id>Q94F62</id>
        <label>BAK1</label>
    </interactant>
    <organismsDiffer>false</organismsDiffer>
    <experiments>5</experiments>
</comment>
<comment type="interaction">
    <interactant intactId="EBI-1238176">
        <id>O48814</id>
    </interactant>
    <interactant intactId="EBI-1799448">
        <id>Q9FL28</id>
        <label>FLS2</label>
    </interactant>
    <organismsDiffer>false</organismsDiffer>
    <experiments>5</experiments>
</comment>
<comment type="subcellular location">
    <subcellularLocation>
        <location evidence="4 15 19 21">Cell membrane</location>
        <topology evidence="4 15">Lipid-anchor</topology>
    </subcellularLocation>
    <subcellularLocation>
        <location evidence="21">Endosome membrane</location>
        <topology evidence="4 15">Lipid-anchor</topology>
    </subcellularLocation>
    <subcellularLocation>
        <location evidence="19">Nucleus</location>
    </subcellularLocation>
    <text evidence="19 21">Linked to the plasma membrane when inactivated, but moves to the nucleus upon pathogen-mediated activation by phosphorylation (PubMed:29649442). Internalized dynamically into endocytic compartments upon the recognition of microbe-associated molecular patterns (MAMPs, e.g. flg22), when monoubiquitinated after phosphorylation and subsequent dissociation of the FLS2/BIK1 complex (PubMed:32404997).</text>
</comment>
<comment type="induction">
    <text evidence="4 6">By infection with necrotrophic pathogens and by paraquat. Not induced by salicylic acid, jasmonate or 1-aminocyclopropane-1-carboxylate (ACC) (PubMed:16339855). Induced by flagellin (flg22) (PubMed:20413097).</text>
</comment>
<comment type="PTM">
    <text evidence="5 6 7 8 10 11 13 15 19 20 21">Phosphorylated by SIK1 to be stabilized (PubMed:30212650). Phosphorylated by FLS2 and BAK1 (PubMed:20404519, PubMed:32404997). Autophosphorylated (PubMed:22504181, PubMed:23431184, PubMed:24104392, PubMed:26021844). Autophosphorylation is reduced in presence of the Xanthomonas campestris effector XopAC/AvrAC (PubMed:22504181, PubMed:32404997). Phosphorylated, especially by EFR at Ser-89 and Thr-90, in response to the microbe-associated molecular pattern (MAMP) flg22 (PubMed:20413097, PubMed:22504181, PubMed:25522736, PubMed:29649442, PubMed:32404997). Phosphorylation in response to flg22 is abolished in presence of the Xanthomonas campestris effector XopAC/AvrAC (PubMed:22504181). Phosphorylated at Ser-233, Ser-236 and Thr-237 by PEPR1 (PubMed:23431184). Phosphorylated at Tyr-150, Tyr-243 and Tyr-250. Tyrosine phosphorylation is required for BIK1 function in plant innate immunity (PubMed:24532660).</text>
</comment>
<comment type="PTM">
    <text evidence="7">Uridylylated at Ser-236 and Thr-237 by the Xanthomonas campestris effector XopAC/AvrAC. This conceals conserved phosphorylation sites in the activation loop, reducing BIK1 kinase activity and consequently inhibiting downstream signaling.</text>
</comment>
<comment type="PTM">
    <text evidence="21">Monoubiquitinated by ATL44/RHA3A and ATL45/RHA3B following phosphorylation upon the recognition of microbe-associated molecular patterns (MAMPs, e.g. flg22) by pattern recognition receptors (PRRs), then released from the FLS2/BAK1 complex and internalized dynamically into endocytic compartments followed by the activation of immune signaling.</text>
</comment>
<comment type="disruption phenotype">
    <text evidence="4 6 9 13 18 23">Altered growth traits, early flowering, weak stems, small siliques and reduced fertility. Mutant plants have a severely impaired resistance to Botrytis and A.brassicicola (PubMed:16339855). Reduced plant size (PubMed:20413097, PubMed:27679580). Enhanced resistance to Plasmodiophora brassicae, a soil-borne obligate pathogen that causes clubroot disease (PubMed:27679580). Hypersensitivity to the plant hormone brassinolide (PubMed:23818580). Reduced calcium levels after elicitation with peptides representing bacteria-derived microbe- and damage-associated molecular patterns (MAMPs, flg22 and elf18, and the endogenous DAMP AtPep1) (PubMed:25522736). Compromised SCOOP10- and SCOOP12-induced root growth inhibition and reactive oxygen species (ROS) production in the double mutant bik1 pbl1 (PubMed:34535661).</text>
</comment>
<comment type="miscellaneous">
    <text>The association with FLS2 and BAK1 is reduced after flagellin perception, BIK1 being probably released from the receptor complex upon phosphorylation.</text>
</comment>
<comment type="similarity">
    <text evidence="2">Belongs to the protein kinase superfamily. Ser/Thr protein kinase family.</text>
</comment>
<accession>O48814</accession>